<feature type="chain" id="PRO_0000394396" description="Glyceraldehyde-3-phosphate dehydrogenase, testis-specific">
    <location>
        <begin position="1" status="less than"/>
        <end position="100" status="greater than"/>
    </location>
</feature>
<feature type="binding site" evidence="1">
    <location>
        <position position="39"/>
    </location>
    <ligand>
        <name>NAD(+)</name>
        <dbReference type="ChEBI" id="CHEBI:57540"/>
    </ligand>
</feature>
<feature type="binding site" evidence="1">
    <location>
        <position position="64"/>
    </location>
    <ligand>
        <name>NAD(+)</name>
        <dbReference type="ChEBI" id="CHEBI:57540"/>
    </ligand>
</feature>
<feature type="binding site" evidence="2">
    <location>
        <position position="89"/>
    </location>
    <ligand>
        <name>D-glyceraldehyde 3-phosphate</name>
        <dbReference type="ChEBI" id="CHEBI:59776"/>
    </ligand>
</feature>
<feature type="non-consecutive residues" evidence="5">
    <location>
        <begin position="22"/>
        <end position="23"/>
    </location>
</feature>
<feature type="non-consecutive residues" evidence="5">
    <location>
        <begin position="33"/>
        <end position="34"/>
    </location>
</feature>
<feature type="non-consecutive residues" evidence="5">
    <location>
        <begin position="59"/>
        <end position="60"/>
    </location>
</feature>
<feature type="non-consecutive residues" evidence="5">
    <location>
        <begin position="80"/>
        <end position="81"/>
    </location>
</feature>
<feature type="non-consecutive residues" evidence="5">
    <location>
        <begin position="89"/>
        <end position="90"/>
    </location>
</feature>
<feature type="non-terminal residue">
    <location>
        <position position="1"/>
    </location>
</feature>
<feature type="non-terminal residue">
    <location>
        <position position="100"/>
    </location>
</feature>
<protein>
    <recommendedName>
        <fullName evidence="2">Glyceraldehyde-3-phosphate dehydrogenase, testis-specific</fullName>
        <ecNumber>1.2.1.12</ecNumber>
    </recommendedName>
    <alternativeName>
        <fullName evidence="2">Spermatogenic glyceraldehyde-3-phosphate dehydrogenase</fullName>
    </alternativeName>
</protein>
<evidence type="ECO:0000250" key="1">
    <source>
        <dbReference type="UniProtKB" id="O14556"/>
    </source>
</evidence>
<evidence type="ECO:0000250" key="2">
    <source>
        <dbReference type="UniProtKB" id="Q64467"/>
    </source>
</evidence>
<evidence type="ECO:0000255" key="3"/>
<evidence type="ECO:0000255" key="4">
    <source>
        <dbReference type="PROSITE-ProRule" id="PRU10009"/>
    </source>
</evidence>
<evidence type="ECO:0000305" key="5"/>
<name>G3PT_MESAU</name>
<proteinExistence type="evidence at protein level"/>
<accession>P86211</accession>
<organism>
    <name type="scientific">Mesocricetus auratus</name>
    <name type="common">Golden hamster</name>
    <dbReference type="NCBI Taxonomy" id="10036"/>
    <lineage>
        <taxon>Eukaryota</taxon>
        <taxon>Metazoa</taxon>
        <taxon>Chordata</taxon>
        <taxon>Craniata</taxon>
        <taxon>Vertebrata</taxon>
        <taxon>Euteleostomi</taxon>
        <taxon>Mammalia</taxon>
        <taxon>Eutheria</taxon>
        <taxon>Euarchontoglires</taxon>
        <taxon>Glires</taxon>
        <taxon>Rodentia</taxon>
        <taxon>Myomorpha</taxon>
        <taxon>Muroidea</taxon>
        <taxon>Cricetidae</taxon>
        <taxon>Cricetinae</taxon>
        <taxon>Mesocricetus</taxon>
    </lineage>
</organism>
<keyword id="KW-0963">Cytoplasm</keyword>
<keyword id="KW-0324">Glycolysis</keyword>
<keyword id="KW-0520">NAD</keyword>
<keyword id="KW-0560">Oxidoreductase</keyword>
<keyword id="KW-1185">Reference proteome</keyword>
<comment type="function">
    <text evidence="2">May play an important role in regulating the switch between different pathways for energy production during spermiogenesis and in the spermatozoon. Required for sperm motility and male fertility (By similarity).</text>
</comment>
<comment type="catalytic activity">
    <reaction evidence="2 4">
        <text>D-glyceraldehyde 3-phosphate + phosphate + NAD(+) = (2R)-3-phospho-glyceroyl phosphate + NADH + H(+)</text>
        <dbReference type="Rhea" id="RHEA:10300"/>
        <dbReference type="ChEBI" id="CHEBI:15378"/>
        <dbReference type="ChEBI" id="CHEBI:43474"/>
        <dbReference type="ChEBI" id="CHEBI:57540"/>
        <dbReference type="ChEBI" id="CHEBI:57604"/>
        <dbReference type="ChEBI" id="CHEBI:57945"/>
        <dbReference type="ChEBI" id="CHEBI:59776"/>
        <dbReference type="EC" id="1.2.1.12"/>
    </reaction>
</comment>
<comment type="pathway">
    <text evidence="2">Carbohydrate degradation; glycolysis; pyruvate from D-glyceraldehyde 3-phosphate: step 1/5.</text>
</comment>
<comment type="subunit">
    <text evidence="2">Homotetramer.</text>
</comment>
<comment type="subcellular location">
    <subcellularLocation>
        <location evidence="2">Cytoplasm</location>
    </subcellularLocation>
</comment>
<comment type="similarity">
    <text evidence="3">Belongs to the glyceraldehyde-3-phosphate dehydrogenase family.</text>
</comment>
<gene>
    <name evidence="2" type="primary">GAPDHS</name>
</gene>
<reference key="1">
    <citation type="journal article" date="2010" name="Asian J. Androl.">
        <title>Glucose-regulated protein precursor (GRP78) and tumor rejection antigen (GP96) are unique to hamster caput epididymal spermatozoa.</title>
        <authorList>
            <person name="Kameshwari D.B."/>
            <person name="Bhande S."/>
            <person name="Sundaram C.S."/>
            <person name="Kota V."/>
            <person name="Siva A.B."/>
            <person name="Shivaji S."/>
        </authorList>
    </citation>
    <scope>IDENTIFICATION BY MASS SPECTROMETRY</scope>
</reference>
<dbReference type="EC" id="1.2.1.12"/>
<dbReference type="UniPathway" id="UPA00109">
    <property type="reaction ID" value="UER00184"/>
</dbReference>
<dbReference type="Proteomes" id="UP000189706">
    <property type="component" value="Unplaced"/>
</dbReference>
<dbReference type="GO" id="GO:0005829">
    <property type="term" value="C:cytosol"/>
    <property type="evidence" value="ECO:0007669"/>
    <property type="project" value="TreeGrafter"/>
</dbReference>
<dbReference type="GO" id="GO:0004365">
    <property type="term" value="F:glyceraldehyde-3-phosphate dehydrogenase (NAD+) (phosphorylating) activity"/>
    <property type="evidence" value="ECO:0007669"/>
    <property type="project" value="UniProtKB-EC"/>
</dbReference>
<dbReference type="GO" id="GO:0051287">
    <property type="term" value="F:NAD binding"/>
    <property type="evidence" value="ECO:0007669"/>
    <property type="project" value="InterPro"/>
</dbReference>
<dbReference type="GO" id="GO:0006096">
    <property type="term" value="P:glycolytic process"/>
    <property type="evidence" value="ECO:0007669"/>
    <property type="project" value="UniProtKB-UniPathway"/>
</dbReference>
<dbReference type="Gene3D" id="3.40.50.720">
    <property type="entry name" value="NAD(P)-binding Rossmann-like Domain"/>
    <property type="match status" value="1"/>
</dbReference>
<dbReference type="InterPro" id="IPR020831">
    <property type="entry name" value="GlycerAld/Erythrose_P_DH"/>
</dbReference>
<dbReference type="InterPro" id="IPR020828">
    <property type="entry name" value="GlycerAld_3-P_DH_NAD(P)-bd"/>
</dbReference>
<dbReference type="InterPro" id="IPR036291">
    <property type="entry name" value="NAD(P)-bd_dom_sf"/>
</dbReference>
<dbReference type="PANTHER" id="PTHR10836">
    <property type="entry name" value="GLYCERALDEHYDE 3-PHOSPHATE DEHYDROGENASE"/>
    <property type="match status" value="1"/>
</dbReference>
<dbReference type="PANTHER" id="PTHR10836:SF79">
    <property type="entry name" value="GLYCERALDEHYDE-3-PHOSPHATE DEHYDROGENASE, TESTIS-SPECIFIC"/>
    <property type="match status" value="1"/>
</dbReference>
<dbReference type="SMART" id="SM00846">
    <property type="entry name" value="Gp_dh_N"/>
    <property type="match status" value="1"/>
</dbReference>
<dbReference type="SUPFAM" id="SSF51735">
    <property type="entry name" value="NAD(P)-binding Rossmann-fold domains"/>
    <property type="match status" value="1"/>
</dbReference>
<sequence length="100" mass="11166">DRCPCPCPCPCPCPVIRPPPPKELTVGINGFGRVVAVNDPFIDPEYMVYMFKYDSTHGRRVVVTAPSPDAPMFVMGVNEKGKLTGMAFRVVDLLRYMFSR</sequence>